<gene>
    <name evidence="5" type="primary">GRI</name>
    <name evidence="8" type="ordered locus">At1g53130</name>
    <name evidence="9" type="ORF">F8L10.2</name>
</gene>
<name>GRI_ARATH</name>
<protein>
    <recommendedName>
        <fullName evidence="5">Protein GRIM REAPER</fullName>
    </recommendedName>
    <alternativeName>
        <fullName evidence="5">Stigma-specific STIG1-like protein GRI</fullName>
    </alternativeName>
    <component>
        <recommendedName>
            <fullName evidence="6">GRIp</fullName>
        </recommendedName>
    </component>
</protein>
<proteinExistence type="evidence at protein level"/>
<reference key="1">
    <citation type="journal article" date="2000" name="Nature">
        <title>Sequence and analysis of chromosome 1 of the plant Arabidopsis thaliana.</title>
        <authorList>
            <person name="Theologis A."/>
            <person name="Ecker J.R."/>
            <person name="Palm C.J."/>
            <person name="Federspiel N.A."/>
            <person name="Kaul S."/>
            <person name="White O."/>
            <person name="Alonso J."/>
            <person name="Altafi H."/>
            <person name="Araujo R."/>
            <person name="Bowman C.L."/>
            <person name="Brooks S.Y."/>
            <person name="Buehler E."/>
            <person name="Chan A."/>
            <person name="Chao Q."/>
            <person name="Chen H."/>
            <person name="Cheuk R.F."/>
            <person name="Chin C.W."/>
            <person name="Chung M.K."/>
            <person name="Conn L."/>
            <person name="Conway A.B."/>
            <person name="Conway A.R."/>
            <person name="Creasy T.H."/>
            <person name="Dewar K."/>
            <person name="Dunn P."/>
            <person name="Etgu P."/>
            <person name="Feldblyum T.V."/>
            <person name="Feng J.-D."/>
            <person name="Fong B."/>
            <person name="Fujii C.Y."/>
            <person name="Gill J.E."/>
            <person name="Goldsmith A.D."/>
            <person name="Haas B."/>
            <person name="Hansen N.F."/>
            <person name="Hughes B."/>
            <person name="Huizar L."/>
            <person name="Hunter J.L."/>
            <person name="Jenkins J."/>
            <person name="Johnson-Hopson C."/>
            <person name="Khan S."/>
            <person name="Khaykin E."/>
            <person name="Kim C.J."/>
            <person name="Koo H.L."/>
            <person name="Kremenetskaia I."/>
            <person name="Kurtz D.B."/>
            <person name="Kwan A."/>
            <person name="Lam B."/>
            <person name="Langin-Hooper S."/>
            <person name="Lee A."/>
            <person name="Lee J.M."/>
            <person name="Lenz C.A."/>
            <person name="Li J.H."/>
            <person name="Li Y.-P."/>
            <person name="Lin X."/>
            <person name="Liu S.X."/>
            <person name="Liu Z.A."/>
            <person name="Luros J.S."/>
            <person name="Maiti R."/>
            <person name="Marziali A."/>
            <person name="Militscher J."/>
            <person name="Miranda M."/>
            <person name="Nguyen M."/>
            <person name="Nierman W.C."/>
            <person name="Osborne B.I."/>
            <person name="Pai G."/>
            <person name="Peterson J."/>
            <person name="Pham P.K."/>
            <person name="Rizzo M."/>
            <person name="Rooney T."/>
            <person name="Rowley D."/>
            <person name="Sakano H."/>
            <person name="Salzberg S.L."/>
            <person name="Schwartz J.R."/>
            <person name="Shinn P."/>
            <person name="Southwick A.M."/>
            <person name="Sun H."/>
            <person name="Tallon L.J."/>
            <person name="Tambunga G."/>
            <person name="Toriumi M.J."/>
            <person name="Town C.D."/>
            <person name="Utterback T."/>
            <person name="Van Aken S."/>
            <person name="Vaysberg M."/>
            <person name="Vysotskaia V.S."/>
            <person name="Walker M."/>
            <person name="Wu D."/>
            <person name="Yu G."/>
            <person name="Fraser C.M."/>
            <person name="Venter J.C."/>
            <person name="Davis R.W."/>
        </authorList>
    </citation>
    <scope>NUCLEOTIDE SEQUENCE [LARGE SCALE GENOMIC DNA]</scope>
    <source>
        <strain>cv. Columbia</strain>
    </source>
</reference>
<reference key="2">
    <citation type="journal article" date="2017" name="Plant J.">
        <title>Araport11: a complete reannotation of the Arabidopsis thaliana reference genome.</title>
        <authorList>
            <person name="Cheng C.Y."/>
            <person name="Krishnakumar V."/>
            <person name="Chan A.P."/>
            <person name="Thibaud-Nissen F."/>
            <person name="Schobel S."/>
            <person name="Town C.D."/>
        </authorList>
    </citation>
    <scope>GENOME REANNOTATION</scope>
    <source>
        <strain>cv. Columbia</strain>
    </source>
</reference>
<reference key="3">
    <citation type="submission" date="2004-09" db="EMBL/GenBank/DDBJ databases">
        <title>Large-scale analysis of RIKEN Arabidopsis full-length (RAFL) cDNAs.</title>
        <authorList>
            <person name="Totoki Y."/>
            <person name="Seki M."/>
            <person name="Ishida J."/>
            <person name="Nakajima M."/>
            <person name="Enju A."/>
            <person name="Kamiya A."/>
            <person name="Narusaka M."/>
            <person name="Shin-i T."/>
            <person name="Nakagawa M."/>
            <person name="Sakamoto N."/>
            <person name="Oishi K."/>
            <person name="Kohara Y."/>
            <person name="Kobayashi M."/>
            <person name="Toyoda A."/>
            <person name="Sakaki Y."/>
            <person name="Sakurai T."/>
            <person name="Iida K."/>
            <person name="Akiyama K."/>
            <person name="Satou M."/>
            <person name="Toyoda T."/>
            <person name="Konagaya A."/>
            <person name="Carninci P."/>
            <person name="Kawai J."/>
            <person name="Hayashizaki Y."/>
            <person name="Shinozaki K."/>
        </authorList>
    </citation>
    <scope>NUCLEOTIDE SEQUENCE [LARGE SCALE MRNA]</scope>
    <source>
        <strain>cv. Columbia</strain>
    </source>
</reference>
<reference key="4">
    <citation type="journal article" date="2003" name="Science">
        <title>Empirical analysis of transcriptional activity in the Arabidopsis genome.</title>
        <authorList>
            <person name="Yamada K."/>
            <person name="Lim J."/>
            <person name="Dale J.M."/>
            <person name="Chen H."/>
            <person name="Shinn P."/>
            <person name="Palm C.J."/>
            <person name="Southwick A.M."/>
            <person name="Wu H.C."/>
            <person name="Kim C.J."/>
            <person name="Nguyen M."/>
            <person name="Pham P.K."/>
            <person name="Cheuk R.F."/>
            <person name="Karlin-Newmann G."/>
            <person name="Liu S.X."/>
            <person name="Lam B."/>
            <person name="Sakano H."/>
            <person name="Wu T."/>
            <person name="Yu G."/>
            <person name="Miranda M."/>
            <person name="Quach H.L."/>
            <person name="Tripp M."/>
            <person name="Chang C.H."/>
            <person name="Lee J.M."/>
            <person name="Toriumi M.J."/>
            <person name="Chan M.M."/>
            <person name="Tang C.C."/>
            <person name="Onodera C.S."/>
            <person name="Deng J.M."/>
            <person name="Akiyama K."/>
            <person name="Ansari Y."/>
            <person name="Arakawa T."/>
            <person name="Banh J."/>
            <person name="Banno F."/>
            <person name="Bowser L."/>
            <person name="Brooks S.Y."/>
            <person name="Carninci P."/>
            <person name="Chao Q."/>
            <person name="Choy N."/>
            <person name="Enju A."/>
            <person name="Goldsmith A.D."/>
            <person name="Gurjal M."/>
            <person name="Hansen N.F."/>
            <person name="Hayashizaki Y."/>
            <person name="Johnson-Hopson C."/>
            <person name="Hsuan V.W."/>
            <person name="Iida K."/>
            <person name="Karnes M."/>
            <person name="Khan S."/>
            <person name="Koesema E."/>
            <person name="Ishida J."/>
            <person name="Jiang P.X."/>
            <person name="Jones T."/>
            <person name="Kawai J."/>
            <person name="Kamiya A."/>
            <person name="Meyers C."/>
            <person name="Nakajima M."/>
            <person name="Narusaka M."/>
            <person name="Seki M."/>
            <person name="Sakurai T."/>
            <person name="Satou M."/>
            <person name="Tamse R."/>
            <person name="Vaysberg M."/>
            <person name="Wallender E.K."/>
            <person name="Wong C."/>
            <person name="Yamamura Y."/>
            <person name="Yuan S."/>
            <person name="Shinozaki K."/>
            <person name="Davis R.W."/>
            <person name="Theologis A."/>
            <person name="Ecker J.R."/>
        </authorList>
    </citation>
    <scope>NUCLEOTIDE SEQUENCE [LARGE SCALE MRNA] OF 80-168</scope>
    <source>
        <strain>cv. Columbia</strain>
    </source>
</reference>
<reference key="5">
    <citation type="journal article" date="2009" name="Proc. Natl. Acad. Sci. U.S.A.">
        <title>Arabidopsis GRI is involved in the regulation of cell death induced by extracellular ROS.</title>
        <authorList>
            <person name="Wrzaczek M."/>
            <person name="Brosche M."/>
            <person name="Kollist H."/>
            <person name="Kangasjarvi J."/>
        </authorList>
    </citation>
    <scope>FUNCTION</scope>
    <scope>TISSUE SPECIFICITY</scope>
    <scope>SUBCELLULAR LOCATION</scope>
    <scope>GENE FAMILY</scope>
</reference>
<reference key="6">
    <citation type="journal article" date="2015" name="EMBO J.">
        <title>GRIM REAPER peptide binds to receptor kinase PRK5 to trigger cell death in Arabidopsis.</title>
        <authorList>
            <person name="Wrzaczek M."/>
            <person name="Vainonen J.P."/>
            <person name="Stael S."/>
            <person name="Tsiatsiani L."/>
            <person name="Help-Rinta-Rahko H."/>
            <person name="Gauthier A."/>
            <person name="Kaufholdt D."/>
            <person name="Bollhoener B."/>
            <person name="Lamminmaeki A."/>
            <person name="Staes A."/>
            <person name="Gevaert K."/>
            <person name="Tuominen H."/>
            <person name="Van Breusegem F."/>
            <person name="Helariutta Y."/>
            <person name="Kangasjaervi J."/>
        </authorList>
    </citation>
    <scope>INTERACTION WITH PRK4 AND PRK5</scope>
    <scope>PROTEOLYTIC PROCESSING OF GRIP</scope>
</reference>
<accession>Q9LNN7</accession>
<accession>Q6NQC7</accession>
<evidence type="ECO:0000255" key="1"/>
<evidence type="ECO:0000255" key="2">
    <source>
        <dbReference type="PROSITE-ProRule" id="PRU00498"/>
    </source>
</evidence>
<evidence type="ECO:0000269" key="3">
    <source>
    </source>
</evidence>
<evidence type="ECO:0000269" key="4">
    <source>
    </source>
</evidence>
<evidence type="ECO:0000303" key="5">
    <source>
    </source>
</evidence>
<evidence type="ECO:0000303" key="6">
    <source>
    </source>
</evidence>
<evidence type="ECO:0000305" key="7"/>
<evidence type="ECO:0000312" key="8">
    <source>
        <dbReference type="Araport" id="AT1G53130"/>
    </source>
</evidence>
<evidence type="ECO:0000312" key="9">
    <source>
        <dbReference type="EMBL" id="AAF87867.1"/>
    </source>
</evidence>
<evidence type="ECO:0000312" key="10">
    <source>
        <dbReference type="Proteomes" id="UP000006548"/>
    </source>
</evidence>
<sequence>MVIKIPNTFIKATSLLSLILYFLIIATSKSNSVLADEVVDQEDDPEYYILDETPSILSNVTISSKTRLLVSHYKKIKKGMRCHVESYNICNGVKANKGTSLLHCCKKHCRNVLGDRNNCGRCGHKCGFGQRCCGGVCTYVNFNPNHCGKCTRKCASGVKCEYGYCGYA</sequence>
<keyword id="KW-0052">Apoplast</keyword>
<keyword id="KW-0325">Glycoprotein</keyword>
<keyword id="KW-0611">Plant defense</keyword>
<keyword id="KW-1185">Reference proteome</keyword>
<keyword id="KW-0964">Secreted</keyword>
<keyword id="KW-0732">Signal</keyword>
<dbReference type="EMBL" id="AC022520">
    <property type="protein sequence ID" value="AAF87867.1"/>
    <property type="molecule type" value="Genomic_DNA"/>
</dbReference>
<dbReference type="EMBL" id="CP002684">
    <property type="protein sequence ID" value="AEE32894.1"/>
    <property type="molecule type" value="Genomic_DNA"/>
</dbReference>
<dbReference type="EMBL" id="AK176040">
    <property type="protein sequence ID" value="BAD43803.1"/>
    <property type="molecule type" value="mRNA"/>
</dbReference>
<dbReference type="EMBL" id="BT010530">
    <property type="protein sequence ID" value="AAQ65153.1"/>
    <property type="molecule type" value="mRNA"/>
</dbReference>
<dbReference type="PIR" id="H96571">
    <property type="entry name" value="H96571"/>
</dbReference>
<dbReference type="RefSeq" id="NP_175721.1">
    <property type="nucleotide sequence ID" value="NM_104192.3"/>
</dbReference>
<dbReference type="STRING" id="3702.Q9LNN7"/>
<dbReference type="GlyCosmos" id="Q9LNN7">
    <property type="glycosylation" value="1 site, No reported glycans"/>
</dbReference>
<dbReference type="GlyGen" id="Q9LNN7">
    <property type="glycosylation" value="1 site"/>
</dbReference>
<dbReference type="PaxDb" id="3702-AT1G53130.1"/>
<dbReference type="ProteomicsDB" id="247220"/>
<dbReference type="EnsemblPlants" id="AT1G53130.1">
    <property type="protein sequence ID" value="AT1G53130.1"/>
    <property type="gene ID" value="AT1G53130"/>
</dbReference>
<dbReference type="GeneID" id="841747"/>
<dbReference type="Gramene" id="AT1G53130.1">
    <property type="protein sequence ID" value="AT1G53130.1"/>
    <property type="gene ID" value="AT1G53130"/>
</dbReference>
<dbReference type="KEGG" id="ath:AT1G53130"/>
<dbReference type="Araport" id="AT1G53130"/>
<dbReference type="TAIR" id="AT1G53130">
    <property type="gene designation" value="GRI"/>
</dbReference>
<dbReference type="eggNOG" id="ENOG502S52A">
    <property type="taxonomic scope" value="Eukaryota"/>
</dbReference>
<dbReference type="HOGENOM" id="CLU_111795_1_1_1"/>
<dbReference type="InParanoid" id="Q9LNN7"/>
<dbReference type="OMA" id="HCCKTHC"/>
<dbReference type="OrthoDB" id="2013942at2759"/>
<dbReference type="PhylomeDB" id="Q9LNN7"/>
<dbReference type="PRO" id="PR:Q9LNN7"/>
<dbReference type="Proteomes" id="UP000006548">
    <property type="component" value="Chromosome 1"/>
</dbReference>
<dbReference type="ExpressionAtlas" id="Q9LNN7">
    <property type="expression patterns" value="baseline and differential"/>
</dbReference>
<dbReference type="GO" id="GO:0048046">
    <property type="term" value="C:apoplast"/>
    <property type="evidence" value="ECO:0007669"/>
    <property type="project" value="UniProtKB-SubCell"/>
</dbReference>
<dbReference type="GO" id="GO:0005615">
    <property type="term" value="C:extracellular space"/>
    <property type="evidence" value="ECO:0000314"/>
    <property type="project" value="TAIR"/>
</dbReference>
<dbReference type="GO" id="GO:0042742">
    <property type="term" value="P:defense response to bacterium"/>
    <property type="evidence" value="ECO:0000315"/>
    <property type="project" value="TAIR"/>
</dbReference>
<dbReference type="GO" id="GO:0009867">
    <property type="term" value="P:jasmonic acid mediated signaling pathway"/>
    <property type="evidence" value="ECO:0000315"/>
    <property type="project" value="TAIR"/>
</dbReference>
<dbReference type="GO" id="GO:0080141">
    <property type="term" value="P:regulation of jasmonic acid biosynthetic process"/>
    <property type="evidence" value="ECO:0000315"/>
    <property type="project" value="TAIR"/>
</dbReference>
<dbReference type="GO" id="GO:0080142">
    <property type="term" value="P:regulation of salicylic acid biosynthetic process"/>
    <property type="evidence" value="ECO:0000315"/>
    <property type="project" value="TAIR"/>
</dbReference>
<dbReference type="GO" id="GO:0010193">
    <property type="term" value="P:response to ozone"/>
    <property type="evidence" value="ECO:0000315"/>
    <property type="project" value="TAIR"/>
</dbReference>
<dbReference type="GO" id="GO:0009863">
    <property type="term" value="P:salicylic acid mediated signaling pathway"/>
    <property type="evidence" value="ECO:0000315"/>
    <property type="project" value="TAIR"/>
</dbReference>
<dbReference type="GO" id="GO:0048316">
    <property type="term" value="P:seed development"/>
    <property type="evidence" value="ECO:0000315"/>
    <property type="project" value="TAIR"/>
</dbReference>
<dbReference type="InterPro" id="IPR006969">
    <property type="entry name" value="Stig-like"/>
</dbReference>
<dbReference type="PANTHER" id="PTHR33227:SF6">
    <property type="entry name" value="PROTEIN GRIM REAPER"/>
    <property type="match status" value="1"/>
</dbReference>
<dbReference type="PANTHER" id="PTHR33227">
    <property type="entry name" value="STIGMA-SPECIFIC STIG1-LIKE PROTEIN 3"/>
    <property type="match status" value="1"/>
</dbReference>
<dbReference type="Pfam" id="PF04885">
    <property type="entry name" value="Stig1"/>
    <property type="match status" value="1"/>
</dbReference>
<comment type="function">
    <text evidence="3 4">Involved in the regulation of cell death induced by extracellular reactive oxygen species (PubMed:19279211, PubMed:25398910). Only the processed peptide, and not the full length GRI can bind in vivo to the extracellular domain of the receptor PRK5 (PubMed:25398910). The GRIp-induced cell death is superoxide and salicylic acid dependent (PubMed:19279211).</text>
</comment>
<comment type="subunit">
    <text evidence="4">Interacts with PRK5 and to a lower extent with PRK4.</text>
</comment>
<comment type="subcellular location">
    <subcellularLocation>
        <location evidence="3">Secreted</location>
        <location evidence="3">Extracellular space</location>
        <location evidence="3">Apoplast</location>
    </subcellularLocation>
</comment>
<comment type="tissue specificity">
    <text evidence="3">Highly expressed in flowers, and at very low levels in leaves.</text>
</comment>
<comment type="similarity">
    <text evidence="7">Belongs to the STIG1 family.</text>
</comment>
<organism evidence="10">
    <name type="scientific">Arabidopsis thaliana</name>
    <name type="common">Mouse-ear cress</name>
    <dbReference type="NCBI Taxonomy" id="3702"/>
    <lineage>
        <taxon>Eukaryota</taxon>
        <taxon>Viridiplantae</taxon>
        <taxon>Streptophyta</taxon>
        <taxon>Embryophyta</taxon>
        <taxon>Tracheophyta</taxon>
        <taxon>Spermatophyta</taxon>
        <taxon>Magnoliopsida</taxon>
        <taxon>eudicotyledons</taxon>
        <taxon>Gunneridae</taxon>
        <taxon>Pentapetalae</taxon>
        <taxon>rosids</taxon>
        <taxon>malvids</taxon>
        <taxon>Brassicales</taxon>
        <taxon>Brassicaceae</taxon>
        <taxon>Camelineae</taxon>
        <taxon>Arabidopsis</taxon>
    </lineage>
</organism>
<feature type="signal peptide" evidence="1">
    <location>
        <begin position="1"/>
        <end position="30"/>
    </location>
</feature>
<feature type="chain" id="PRO_0000431926" description="Protein GRIM REAPER" evidence="1">
    <location>
        <begin position="31"/>
        <end position="168"/>
    </location>
</feature>
<feature type="peptide" id="PRO_0000431927" description="GRIp">
    <location>
        <begin position="68"/>
        <end position="78"/>
    </location>
</feature>
<feature type="site" description="Cleavage; by AMC9" evidence="4">
    <location>
        <begin position="67"/>
        <end position="68"/>
    </location>
</feature>
<feature type="site" description="Cleavage; by AMC9" evidence="4">
    <location>
        <begin position="78"/>
        <end position="79"/>
    </location>
</feature>
<feature type="glycosylation site" description="N-linked (GlcNAc...) asparagine" evidence="2">
    <location>
        <position position="59"/>
    </location>
</feature>